<reference key="1">
    <citation type="journal article" date="2000" name="Mol. Microbiol.">
        <title>BasT, a membrane-bound transducer protein for amino acid detection in Halobacterium salinarum.</title>
        <authorList>
            <person name="Kokoeva M.V."/>
            <person name="Oesterhelt D."/>
        </authorList>
    </citation>
    <scope>NUCLEOTIDE SEQUENCE [GENOMIC DNA]</scope>
    <scope>FUNCTION</scope>
    <scope>SUBCELLULAR LOCATION</scope>
    <scope>METHYLATION</scope>
    <scope>DISRUPTION PHENOTYPE</scope>
    <scope>GENE NAME</scope>
    <source>
        <strain>R1 / S9</strain>
    </source>
</reference>
<reference key="2">
    <citation type="journal article" date="2008" name="Genomics">
        <title>Evolution in the laboratory: the genome of Halobacterium salinarum strain R1 compared to that of strain NRC-1.</title>
        <authorList>
            <person name="Pfeiffer F."/>
            <person name="Schuster S.C."/>
            <person name="Broicher A."/>
            <person name="Falb M."/>
            <person name="Palm P."/>
            <person name="Rodewald K."/>
            <person name="Ruepp A."/>
            <person name="Soppa J."/>
            <person name="Tittor J."/>
            <person name="Oesterhelt D."/>
        </authorList>
    </citation>
    <scope>NUCLEOTIDE SEQUENCE [LARGE SCALE GENOMIC DNA]</scope>
    <source>
        <strain>ATCC 29341 / DSM 671 / R1</strain>
    </source>
</reference>
<reference key="3">
    <citation type="journal article" date="2002" name="EMBO J.">
        <title>A novel mode of sensory transduction in archaea: binding protein-mediated chemotaxis towards osmoprotectants and amino acids.</title>
        <authorList>
            <person name="Kokoeva M.V."/>
            <person name="Storch K.F."/>
            <person name="Klein C."/>
            <person name="Oesterhelt D."/>
        </authorList>
    </citation>
    <scope>FUNCTION</scope>
    <scope>DISRUPTION PHENOTYPE</scope>
    <source>
        <strain>R1 / S9</strain>
    </source>
</reference>
<reference key="4">
    <citation type="journal article" date="2008" name="J. Mol. Biol.">
        <title>Physiological sites of deamidation and methyl esterification in sensory transducers of Halobacterium salinarum.</title>
        <authorList>
            <person name="Koch M.K."/>
            <person name="Staudinger W.F."/>
            <person name="Siedler F."/>
            <person name="Oesterhelt D."/>
        </authorList>
    </citation>
    <scope>METHYLATION AT GLU-554; GLU-736 AND GLU-763</scope>
    <source>
        <strain>R1 / S9</strain>
    </source>
</reference>
<reference key="5">
    <citation type="journal article" date="2012" name="BMC Microbiol.">
        <title>The protein interaction network of a taxis signal transduction system in a halophilic archaeon.</title>
        <authorList>
            <person name="Schlesner M."/>
            <person name="Miller A."/>
            <person name="Besir H."/>
            <person name="Aivaliotis M."/>
            <person name="Streif J."/>
            <person name="Scheffer B."/>
            <person name="Siedler F."/>
            <person name="Oesterhelt D."/>
        </authorList>
    </citation>
    <scope>INTERACTION WITH CHEA; CHEY; CHEW1 AND CHEW2</scope>
    <source>
        <strain>ATCC 29341 / DSM 671 / R1</strain>
    </source>
</reference>
<comment type="function">
    <text evidence="5 6">Mediates chemotaxis towards five attractant amino acids (leucine, isoleucine, valine, methionine and cysteine). Probably transduces the signal from the substrate-binding protein BasB to the histidine kinase CheA.</text>
</comment>
<comment type="subunit">
    <text evidence="8">Interacts with CheA, CheY, CheW1 and CheW2.</text>
</comment>
<comment type="subcellular location">
    <subcellularLocation>
        <location evidence="5">Cell membrane</location>
        <topology evidence="5">Multi-pass membrane protein</topology>
    </subcellularLocation>
</comment>
<comment type="PTM">
    <text evidence="5 7">Methylated by CheR.</text>
</comment>
<comment type="disruption phenotype">
    <text evidence="5 6">Mutants completely lose the chemotactic response towards leucine, isoleucine, valine, methionine and cysteine, but they still respond to arginine.</text>
</comment>
<comment type="similarity">
    <text evidence="9">Belongs to the methyl-accepting chemotaxis (MCP) protein family.</text>
</comment>
<sequence length="805" mass="84831">MSDIDRGLFERVLPARIRGSYAAKFNVLLLVVVIIVAAAGGYIHLQTQSTVGENTERRVSGIAEQQAATLHDWLTQKESTTTFLASNIGGDAVRTSDVKPQLERQLATLQQDVRAIHVVSTSQDTVVASTDDARSGTTLQAGDAPWLSTIEDGTTDVSVSDPYEVDDSPVVAMTAPTDKPGWVLVMTMSLAQHSQSFNSPIATGDVKVVNGDGVITLDNRNRALLEQYTDTAGNVPAAVATARSGQTVYNTEPERTGMDDGRYATAYTPVAGTDWVLTYHVPRGQAYALQSEVTQNLAGLVVVALVGLLLVGLTVGRRTSSALDELAGVAAAIADGDLDTTIPDTDRTDELGQLVGAFGEMQTYLTTAASQADALADQNFDADVLDEDLPGAFGASLSQMHTRLEALITDLDEAREDAEQTRKDAEEARAASERLNERLERRAAEYSDEMAAAAAGDLTRRLDEDVDSEPMQDIAEAFNDMMGDVEATLAQVRSIADAVDAASTDVSTSAAEIRSASDQVSESVQDISADADQQRDRLGTVGDEVTSLSATVEEIAASADDVAETVNQAATESERGQELGEDAVAELERIEATADSAVERVTALEEAVDAIGDVTGVITDIAEQTNMLALNANIEAARADKSGDGFAVVADEVKDLADEVKESATEIETLVDDVQADVADTVADMSELGDRVDAGSETIEAALAALDDIGDQVEAANGSVQSISDATDEQAASTEEVVTMIDEVTDLSDRTATESQQVSAAAEEQAASVSEVAGRADDLDDQVSTLNDLLDQFDARAASADTDEN</sequence>
<dbReference type="EMBL" id="AJ245950">
    <property type="protein sequence ID" value="CAB82572.1"/>
    <property type="molecule type" value="Genomic_DNA"/>
</dbReference>
<dbReference type="EMBL" id="AM774415">
    <property type="protein sequence ID" value="CAP14353.1"/>
    <property type="molecule type" value="Genomic_DNA"/>
</dbReference>
<dbReference type="PIR" id="T48840">
    <property type="entry name" value="T48840"/>
</dbReference>
<dbReference type="RefSeq" id="WP_012289396.1">
    <property type="nucleotide sequence ID" value="NC_010364.1"/>
</dbReference>
<dbReference type="SMR" id="B0R6I4"/>
<dbReference type="EnsemblBacteria" id="CAP14353">
    <property type="protein sequence ID" value="CAP14353"/>
    <property type="gene ID" value="OE_3611R"/>
</dbReference>
<dbReference type="GeneID" id="68694480"/>
<dbReference type="KEGG" id="hsl:OE_3611R"/>
<dbReference type="HOGENOM" id="CLU_000445_107_19_2"/>
<dbReference type="PhylomeDB" id="B0R6I4"/>
<dbReference type="Proteomes" id="UP000001321">
    <property type="component" value="Chromosome"/>
</dbReference>
<dbReference type="GO" id="GO:0005886">
    <property type="term" value="C:plasma membrane"/>
    <property type="evidence" value="ECO:0007669"/>
    <property type="project" value="UniProtKB-SubCell"/>
</dbReference>
<dbReference type="GO" id="GO:0004888">
    <property type="term" value="F:transmembrane signaling receptor activity"/>
    <property type="evidence" value="ECO:0007669"/>
    <property type="project" value="InterPro"/>
</dbReference>
<dbReference type="GO" id="GO:0006935">
    <property type="term" value="P:chemotaxis"/>
    <property type="evidence" value="ECO:0007669"/>
    <property type="project" value="UniProtKB-KW"/>
</dbReference>
<dbReference type="GO" id="GO:0007165">
    <property type="term" value="P:signal transduction"/>
    <property type="evidence" value="ECO:0007669"/>
    <property type="project" value="UniProtKB-KW"/>
</dbReference>
<dbReference type="CDD" id="cd06225">
    <property type="entry name" value="HAMP"/>
    <property type="match status" value="1"/>
</dbReference>
<dbReference type="CDD" id="cd11386">
    <property type="entry name" value="MCP_signal"/>
    <property type="match status" value="1"/>
</dbReference>
<dbReference type="Gene3D" id="6.10.340.10">
    <property type="match status" value="1"/>
</dbReference>
<dbReference type="Gene3D" id="1.10.287.950">
    <property type="entry name" value="Methyl-accepting chemotaxis protein"/>
    <property type="match status" value="1"/>
</dbReference>
<dbReference type="Gene3D" id="3.30.450.20">
    <property type="entry name" value="PAS domain"/>
    <property type="match status" value="2"/>
</dbReference>
<dbReference type="InterPro" id="IPR004090">
    <property type="entry name" value="Chemotax_Me-accpt_rcpt"/>
</dbReference>
<dbReference type="InterPro" id="IPR003660">
    <property type="entry name" value="HAMP_dom"/>
</dbReference>
<dbReference type="InterPro" id="IPR004089">
    <property type="entry name" value="MCPsignal_dom"/>
</dbReference>
<dbReference type="PANTHER" id="PTHR32089:SF112">
    <property type="entry name" value="LYSOZYME-LIKE PROTEIN-RELATED"/>
    <property type="match status" value="1"/>
</dbReference>
<dbReference type="PANTHER" id="PTHR32089">
    <property type="entry name" value="METHYL-ACCEPTING CHEMOTAXIS PROTEIN MCPB"/>
    <property type="match status" value="1"/>
</dbReference>
<dbReference type="Pfam" id="PF00672">
    <property type="entry name" value="HAMP"/>
    <property type="match status" value="1"/>
</dbReference>
<dbReference type="Pfam" id="PF00015">
    <property type="entry name" value="MCPsignal"/>
    <property type="match status" value="1"/>
</dbReference>
<dbReference type="PRINTS" id="PR00260">
    <property type="entry name" value="CHEMTRNSDUCR"/>
</dbReference>
<dbReference type="SMART" id="SM00304">
    <property type="entry name" value="HAMP"/>
    <property type="match status" value="3"/>
</dbReference>
<dbReference type="SMART" id="SM00283">
    <property type="entry name" value="MA"/>
    <property type="match status" value="1"/>
</dbReference>
<dbReference type="SUPFAM" id="SSF158472">
    <property type="entry name" value="HAMP domain-like"/>
    <property type="match status" value="1"/>
</dbReference>
<dbReference type="SUPFAM" id="SSF58104">
    <property type="entry name" value="Methyl-accepting chemotaxis protein (MCP) signaling domain"/>
    <property type="match status" value="1"/>
</dbReference>
<dbReference type="PROSITE" id="PS50111">
    <property type="entry name" value="CHEMOTAXIS_TRANSDUC_2"/>
    <property type="match status" value="1"/>
</dbReference>
<dbReference type="PROSITE" id="PS50885">
    <property type="entry name" value="HAMP"/>
    <property type="match status" value="2"/>
</dbReference>
<feature type="chain" id="PRO_0000428989" description="Transducer protein BasT">
    <location>
        <begin position="1"/>
        <end position="805"/>
    </location>
</feature>
<feature type="transmembrane region" description="Helical" evidence="1">
    <location>
        <begin position="25"/>
        <end position="45"/>
    </location>
</feature>
<feature type="transmembrane region" description="Helical" evidence="1">
    <location>
        <begin position="296"/>
        <end position="316"/>
    </location>
</feature>
<feature type="domain" description="HAMP 1" evidence="2">
    <location>
        <begin position="317"/>
        <end position="370"/>
    </location>
</feature>
<feature type="domain" description="HAMP 2" evidence="2">
    <location>
        <begin position="437"/>
        <end position="490"/>
    </location>
</feature>
<feature type="domain" description="Methyl-accepting transducer" evidence="3">
    <location>
        <begin position="509"/>
        <end position="745"/>
    </location>
</feature>
<feature type="region of interest" description="Disordered" evidence="4">
    <location>
        <begin position="513"/>
        <end position="532"/>
    </location>
</feature>
<feature type="region of interest" description="Disordered" evidence="4">
    <location>
        <begin position="752"/>
        <end position="779"/>
    </location>
</feature>
<feature type="compositionally biased region" description="Polar residues" evidence="4">
    <location>
        <begin position="516"/>
        <end position="526"/>
    </location>
</feature>
<feature type="compositionally biased region" description="Low complexity" evidence="4">
    <location>
        <begin position="754"/>
        <end position="773"/>
    </location>
</feature>
<feature type="modified residue" description="Glutamate methyl ester (Glu)" evidence="7">
    <location>
        <position position="554"/>
    </location>
</feature>
<feature type="modified residue" description="Glutamate methyl ester (Glu)" evidence="7">
    <location>
        <position position="736"/>
    </location>
</feature>
<feature type="modified residue" description="Glutamate methyl ester (Glu)" evidence="7">
    <location>
        <position position="763"/>
    </location>
</feature>
<name>BAST_HALS3</name>
<evidence type="ECO:0000255" key="1"/>
<evidence type="ECO:0000255" key="2">
    <source>
        <dbReference type="PROSITE-ProRule" id="PRU00102"/>
    </source>
</evidence>
<evidence type="ECO:0000255" key="3">
    <source>
        <dbReference type="PROSITE-ProRule" id="PRU00284"/>
    </source>
</evidence>
<evidence type="ECO:0000256" key="4">
    <source>
        <dbReference type="SAM" id="MobiDB-lite"/>
    </source>
</evidence>
<evidence type="ECO:0000269" key="5">
    <source>
    </source>
</evidence>
<evidence type="ECO:0000269" key="6">
    <source>
    </source>
</evidence>
<evidence type="ECO:0000269" key="7">
    <source>
    </source>
</evidence>
<evidence type="ECO:0000269" key="8">
    <source>
    </source>
</evidence>
<evidence type="ECO:0000305" key="9"/>
<gene>
    <name type="primary">basT</name>
    <name type="synonym">htr3</name>
    <name type="ordered locus">OE_3611R</name>
</gene>
<keyword id="KW-1003">Cell membrane</keyword>
<keyword id="KW-0145">Chemotaxis</keyword>
<keyword id="KW-0472">Membrane</keyword>
<keyword id="KW-0488">Methylation</keyword>
<keyword id="KW-0677">Repeat</keyword>
<keyword id="KW-0807">Transducer</keyword>
<keyword id="KW-0812">Transmembrane</keyword>
<keyword id="KW-1133">Transmembrane helix</keyword>
<proteinExistence type="evidence at protein level"/>
<accession>B0R6I4</accession>
<accession>Q9P9J0</accession>
<organism>
    <name type="scientific">Halobacterium salinarum (strain ATCC 29341 / DSM 671 / R1)</name>
    <dbReference type="NCBI Taxonomy" id="478009"/>
    <lineage>
        <taxon>Archaea</taxon>
        <taxon>Methanobacteriati</taxon>
        <taxon>Methanobacteriota</taxon>
        <taxon>Stenosarchaea group</taxon>
        <taxon>Halobacteria</taxon>
        <taxon>Halobacteriales</taxon>
        <taxon>Halobacteriaceae</taxon>
        <taxon>Halobacterium</taxon>
        <taxon>Halobacterium salinarum NRC-34001</taxon>
    </lineage>
</organism>
<protein>
    <recommendedName>
        <fullName>Transducer protein BasT</fullName>
    </recommendedName>
    <alternativeName>
        <fullName>Branched chain and sulfur-containing amino acids transducer protein</fullName>
    </alternativeName>
</protein>